<proteinExistence type="inferred from homology"/>
<protein>
    <recommendedName>
        <fullName evidence="1">Cytochrome b559 subunit beta</fullName>
    </recommendedName>
    <alternativeName>
        <fullName evidence="1">PSII reaction center subunit VI</fullName>
    </alternativeName>
</protein>
<dbReference type="EMBL" id="AY100887">
    <property type="protein sequence ID" value="AAM55669.1"/>
    <property type="molecule type" value="Genomic_DNA"/>
</dbReference>
<dbReference type="SMR" id="Q7H8E7"/>
<dbReference type="GO" id="GO:0009535">
    <property type="term" value="C:chloroplast thylakoid membrane"/>
    <property type="evidence" value="ECO:0007669"/>
    <property type="project" value="UniProtKB-SubCell"/>
</dbReference>
<dbReference type="GO" id="GO:0009539">
    <property type="term" value="C:photosystem II reaction center"/>
    <property type="evidence" value="ECO:0007669"/>
    <property type="project" value="InterPro"/>
</dbReference>
<dbReference type="GO" id="GO:0009055">
    <property type="term" value="F:electron transfer activity"/>
    <property type="evidence" value="ECO:0007669"/>
    <property type="project" value="UniProtKB-UniRule"/>
</dbReference>
<dbReference type="GO" id="GO:0020037">
    <property type="term" value="F:heme binding"/>
    <property type="evidence" value="ECO:0007669"/>
    <property type="project" value="InterPro"/>
</dbReference>
<dbReference type="GO" id="GO:0005506">
    <property type="term" value="F:iron ion binding"/>
    <property type="evidence" value="ECO:0007669"/>
    <property type="project" value="UniProtKB-UniRule"/>
</dbReference>
<dbReference type="GO" id="GO:0009767">
    <property type="term" value="P:photosynthetic electron transport chain"/>
    <property type="evidence" value="ECO:0007669"/>
    <property type="project" value="InterPro"/>
</dbReference>
<dbReference type="HAMAP" id="MF_00643">
    <property type="entry name" value="PSII_PsbF"/>
    <property type="match status" value="1"/>
</dbReference>
<dbReference type="InterPro" id="IPR006241">
    <property type="entry name" value="PSII_cyt_b559_bsu"/>
</dbReference>
<dbReference type="InterPro" id="IPR006216">
    <property type="entry name" value="PSII_cyt_b559_CS"/>
</dbReference>
<dbReference type="InterPro" id="IPR013081">
    <property type="entry name" value="PSII_cyt_b559_N"/>
</dbReference>
<dbReference type="NCBIfam" id="TIGR01333">
    <property type="entry name" value="cyt_b559_beta"/>
    <property type="match status" value="1"/>
</dbReference>
<dbReference type="Pfam" id="PF00283">
    <property type="entry name" value="Cytochrom_B559"/>
    <property type="match status" value="1"/>
</dbReference>
<dbReference type="PIRSF" id="PIRSF000037">
    <property type="entry name" value="PsbF"/>
    <property type="match status" value="1"/>
</dbReference>
<dbReference type="SUPFAM" id="SSF161045">
    <property type="entry name" value="Cytochrome b559 subunits"/>
    <property type="match status" value="1"/>
</dbReference>
<dbReference type="PROSITE" id="PS00537">
    <property type="entry name" value="CYTOCHROME_B559"/>
    <property type="match status" value="1"/>
</dbReference>
<organism>
    <name type="scientific">Calystegia sepium</name>
    <name type="common">Hedge bindweed</name>
    <name type="synonym">Convolvulus sepium</name>
    <dbReference type="NCBI Taxonomy" id="47519"/>
    <lineage>
        <taxon>Eukaryota</taxon>
        <taxon>Viridiplantae</taxon>
        <taxon>Streptophyta</taxon>
        <taxon>Embryophyta</taxon>
        <taxon>Tracheophyta</taxon>
        <taxon>Spermatophyta</taxon>
        <taxon>Magnoliopsida</taxon>
        <taxon>eudicotyledons</taxon>
        <taxon>Gunneridae</taxon>
        <taxon>Pentapetalae</taxon>
        <taxon>asterids</taxon>
        <taxon>lamiids</taxon>
        <taxon>Solanales</taxon>
        <taxon>Convolvulaceae</taxon>
        <taxon>Convolvuleae</taxon>
        <taxon>Calystegia</taxon>
    </lineage>
</organism>
<accession>Q7H8E7</accession>
<feature type="chain" id="PRO_0000200366" description="Cytochrome b559 subunit beta">
    <location>
        <begin position="1"/>
        <end position="39"/>
    </location>
</feature>
<feature type="transmembrane region" description="Helical" evidence="1">
    <location>
        <begin position="14"/>
        <end position="30"/>
    </location>
</feature>
<feature type="binding site" description="axial binding residue" evidence="1">
    <location>
        <position position="18"/>
    </location>
    <ligand>
        <name>heme</name>
        <dbReference type="ChEBI" id="CHEBI:30413"/>
        <note>ligand shared with alpha subunit</note>
    </ligand>
    <ligandPart>
        <name>Fe</name>
        <dbReference type="ChEBI" id="CHEBI:18248"/>
    </ligandPart>
</feature>
<sequence length="39" mass="4484">MTIDRTYPIFTVRWLAVHGLAVPTVFFLGSISAMQFIQR</sequence>
<name>PSBF_CALSE</name>
<keyword id="KW-0150">Chloroplast</keyword>
<keyword id="KW-0249">Electron transport</keyword>
<keyword id="KW-0349">Heme</keyword>
<keyword id="KW-0408">Iron</keyword>
<keyword id="KW-0472">Membrane</keyword>
<keyword id="KW-0479">Metal-binding</keyword>
<keyword id="KW-0602">Photosynthesis</keyword>
<keyword id="KW-0604">Photosystem II</keyword>
<keyword id="KW-0934">Plastid</keyword>
<keyword id="KW-0793">Thylakoid</keyword>
<keyword id="KW-0812">Transmembrane</keyword>
<keyword id="KW-1133">Transmembrane helix</keyword>
<keyword id="KW-0813">Transport</keyword>
<geneLocation type="chloroplast"/>
<reference key="1">
    <citation type="journal article" date="2002" name="Am. J. Bot.">
        <title>Monophyly of the Convolvulaceae and circumscription of their major lineages based on DNA sequences of multiple chloroplast loci.</title>
        <authorList>
            <person name="Stefanovic S."/>
            <person name="Krueger L."/>
            <person name="Olmstead R.G."/>
        </authorList>
        <dbReference type="AGRICOLA" id="IND23320510"/>
    </citation>
    <scope>NUCLEOTIDE SEQUENCE [GENOMIC DNA]</scope>
</reference>
<comment type="function">
    <text evidence="1">This b-type cytochrome is tightly associated with the reaction center of photosystem II (PSII). PSII is a light-driven water:plastoquinone oxidoreductase that uses light energy to abstract electrons from H(2)O, generating O(2) and a proton gradient subsequently used for ATP formation. It consists of a core antenna complex that captures photons, and an electron transfer chain that converts photonic excitation into a charge separation.</text>
</comment>
<comment type="cofactor">
    <cofactor evidence="1">
        <name>heme b</name>
        <dbReference type="ChEBI" id="CHEBI:60344"/>
    </cofactor>
    <text evidence="1">With its partner (PsbE) binds heme. PSII binds additional chlorophylls, carotenoids and specific lipids.</text>
</comment>
<comment type="subunit">
    <text evidence="1">Heterodimer of an alpha subunit and a beta subunit. PSII is composed of 1 copy each of membrane proteins PsbA, PsbB, PsbC, PsbD, PsbE, PsbF, PsbH, PsbI, PsbJ, PsbK, PsbL, PsbM, PsbT, PsbX, PsbY, PsbZ, Psb30/Ycf12, at least 3 peripheral proteins of the oxygen-evolving complex and a large number of cofactors. It forms dimeric complexes.</text>
</comment>
<comment type="subcellular location">
    <subcellularLocation>
        <location evidence="1">Plastid</location>
        <location evidence="1">Chloroplast thylakoid membrane</location>
        <topology evidence="1">Single-pass membrane protein</topology>
    </subcellularLocation>
</comment>
<comment type="similarity">
    <text evidence="1">Belongs to the PsbE/PsbF family.</text>
</comment>
<evidence type="ECO:0000255" key="1">
    <source>
        <dbReference type="HAMAP-Rule" id="MF_00643"/>
    </source>
</evidence>
<gene>
    <name evidence="1" type="primary">psbF</name>
</gene>